<evidence type="ECO:0000255" key="1"/>
<evidence type="ECO:0000305" key="2"/>
<comment type="subcellular location">
    <subcellularLocation>
        <location evidence="2">Membrane</location>
        <topology evidence="2">Single-pass membrane protein</topology>
    </subcellularLocation>
</comment>
<comment type="similarity">
    <text evidence="2">Belongs to the UPF0496 family.</text>
</comment>
<comment type="sequence caution" evidence="2">
    <conflict type="erroneous gene model prediction">
        <sequence resource="EMBL-CDS" id="AAK98722"/>
    </conflict>
</comment>
<comment type="sequence caution" evidence="2">
    <conflict type="erroneous gene model prediction">
        <sequence resource="EMBL-CDS" id="AAN87731"/>
    </conflict>
</comment>
<comment type="sequence caution" evidence="2">
    <conflict type="erroneous gene model prediction">
        <sequence resource="EMBL-CDS" id="EAZ25586"/>
    </conflict>
</comment>
<organism>
    <name type="scientific">Oryza sativa subsp. japonica</name>
    <name type="common">Rice</name>
    <dbReference type="NCBI Taxonomy" id="39947"/>
    <lineage>
        <taxon>Eukaryota</taxon>
        <taxon>Viridiplantae</taxon>
        <taxon>Streptophyta</taxon>
        <taxon>Embryophyta</taxon>
        <taxon>Tracheophyta</taxon>
        <taxon>Spermatophyta</taxon>
        <taxon>Magnoliopsida</taxon>
        <taxon>Liliopsida</taxon>
        <taxon>Poales</taxon>
        <taxon>Poaceae</taxon>
        <taxon>BOP clade</taxon>
        <taxon>Oryzoideae</taxon>
        <taxon>Oryzeae</taxon>
        <taxon>Oryzinae</taxon>
        <taxon>Oryza</taxon>
        <taxon>Oryza sativa</taxon>
    </lineage>
</organism>
<sequence>MGATFRCFGGCVKPDDQQVHEPKKVVAPSSSFDFREEYTSAFRTESYNDFWARVLDITLAHGAALVPRHGGGGGCAASKRLPSYRLFAEHLLEPDQRAVAAALASPRGSRLRPDVRGLLAAYYAETANASFLCSHLLKDIEHIRLRYRPLKHTLRKLASDVGVSGLADVSAALGQPFTALAASQGRLREVQAGSGDLLRGLDAGRKKARHRIRSVARLRRALSVSFVTAVAVVAVVGACIGVHILAAFAAFPMMSPAWLGERFFSGRAARRALVQLEAAAKGTYILNRDMETISRLVARVRDEGEHMVALRRLCVEHRPAAGAGGKGRLVQEVLRQLSKNEESFRQQLDELEEHLFLCFMTTNKARIMVMNFMAAAAR</sequence>
<reference key="1">
    <citation type="journal article" date="2005" name="Genome Res.">
        <title>Sequence, annotation, and analysis of synteny between rice chromosome 3 and diverged grass species.</title>
        <authorList>
            <consortium name="The rice chromosome 3 sequencing consortium"/>
            <person name="Buell C.R."/>
            <person name="Yuan Q."/>
            <person name="Ouyang S."/>
            <person name="Liu J."/>
            <person name="Zhu W."/>
            <person name="Wang A."/>
            <person name="Maiti R."/>
            <person name="Haas B."/>
            <person name="Wortman J."/>
            <person name="Pertea M."/>
            <person name="Jones K.M."/>
            <person name="Kim M."/>
            <person name="Overton L."/>
            <person name="Tsitrin T."/>
            <person name="Fadrosh D."/>
            <person name="Bera J."/>
            <person name="Weaver B."/>
            <person name="Jin S."/>
            <person name="Johri S."/>
            <person name="Reardon M."/>
            <person name="Webb K."/>
            <person name="Hill J."/>
            <person name="Moffat K."/>
            <person name="Tallon L."/>
            <person name="Van Aken S."/>
            <person name="Lewis M."/>
            <person name="Utterback T."/>
            <person name="Feldblyum T."/>
            <person name="Zismann V."/>
            <person name="Iobst S."/>
            <person name="Hsiao J."/>
            <person name="de Vazeille A.R."/>
            <person name="Salzberg S.L."/>
            <person name="White O."/>
            <person name="Fraser C.M."/>
            <person name="Yu Y."/>
            <person name="Kim H."/>
            <person name="Rambo T."/>
            <person name="Currie J."/>
            <person name="Collura K."/>
            <person name="Kernodle-Thompson S."/>
            <person name="Wei F."/>
            <person name="Kudrna K."/>
            <person name="Ammiraju J.S.S."/>
            <person name="Luo M."/>
            <person name="Goicoechea J.L."/>
            <person name="Wing R.A."/>
            <person name="Henry D."/>
            <person name="Oates R."/>
            <person name="Palmer M."/>
            <person name="Pries G."/>
            <person name="Saski C."/>
            <person name="Simmons J."/>
            <person name="Soderlund C."/>
            <person name="Nelson W."/>
            <person name="de la Bastide M."/>
            <person name="Spiegel L."/>
            <person name="Nascimento L."/>
            <person name="Huang E."/>
            <person name="Preston R."/>
            <person name="Zutavern T."/>
            <person name="Palmer L."/>
            <person name="O'Shaughnessy A."/>
            <person name="Dike S."/>
            <person name="McCombie W.R."/>
            <person name="Minx P."/>
            <person name="Cordum H."/>
            <person name="Wilson R."/>
            <person name="Jin W."/>
            <person name="Lee H.R."/>
            <person name="Jiang J."/>
            <person name="Jackson S."/>
        </authorList>
    </citation>
    <scope>NUCLEOTIDE SEQUENCE [LARGE SCALE GENOMIC DNA]</scope>
    <source>
        <strain>cv. Nipponbare</strain>
    </source>
</reference>
<reference key="2">
    <citation type="journal article" date="2005" name="Nature">
        <title>The map-based sequence of the rice genome.</title>
        <authorList>
            <consortium name="International rice genome sequencing project (IRGSP)"/>
        </authorList>
    </citation>
    <scope>NUCLEOTIDE SEQUENCE [LARGE SCALE GENOMIC DNA]</scope>
    <source>
        <strain>cv. Nipponbare</strain>
    </source>
</reference>
<reference key="3">
    <citation type="journal article" date="2008" name="Nucleic Acids Res.">
        <title>The rice annotation project database (RAP-DB): 2008 update.</title>
        <authorList>
            <consortium name="The rice annotation project (RAP)"/>
        </authorList>
    </citation>
    <scope>GENOME REANNOTATION</scope>
    <source>
        <strain>cv. Nipponbare</strain>
    </source>
</reference>
<reference key="4">
    <citation type="journal article" date="2013" name="Rice">
        <title>Improvement of the Oryza sativa Nipponbare reference genome using next generation sequence and optical map data.</title>
        <authorList>
            <person name="Kawahara Y."/>
            <person name="de la Bastide M."/>
            <person name="Hamilton J.P."/>
            <person name="Kanamori H."/>
            <person name="McCombie W.R."/>
            <person name="Ouyang S."/>
            <person name="Schwartz D.C."/>
            <person name="Tanaka T."/>
            <person name="Wu J."/>
            <person name="Zhou S."/>
            <person name="Childs K.L."/>
            <person name="Davidson R.M."/>
            <person name="Lin H."/>
            <person name="Quesada-Ocampo L."/>
            <person name="Vaillancourt B."/>
            <person name="Sakai H."/>
            <person name="Lee S.S."/>
            <person name="Kim J."/>
            <person name="Numa H."/>
            <person name="Itoh T."/>
            <person name="Buell C.R."/>
            <person name="Matsumoto T."/>
        </authorList>
    </citation>
    <scope>GENOME REANNOTATION</scope>
    <source>
        <strain>cv. Nipponbare</strain>
    </source>
</reference>
<reference key="5">
    <citation type="journal article" date="2005" name="PLoS Biol.">
        <title>The genomes of Oryza sativa: a history of duplications.</title>
        <authorList>
            <person name="Yu J."/>
            <person name="Wang J."/>
            <person name="Lin W."/>
            <person name="Li S."/>
            <person name="Li H."/>
            <person name="Zhou J."/>
            <person name="Ni P."/>
            <person name="Dong W."/>
            <person name="Hu S."/>
            <person name="Zeng C."/>
            <person name="Zhang J."/>
            <person name="Zhang Y."/>
            <person name="Li R."/>
            <person name="Xu Z."/>
            <person name="Li S."/>
            <person name="Li X."/>
            <person name="Zheng H."/>
            <person name="Cong L."/>
            <person name="Lin L."/>
            <person name="Yin J."/>
            <person name="Geng J."/>
            <person name="Li G."/>
            <person name="Shi J."/>
            <person name="Liu J."/>
            <person name="Lv H."/>
            <person name="Li J."/>
            <person name="Wang J."/>
            <person name="Deng Y."/>
            <person name="Ran L."/>
            <person name="Shi X."/>
            <person name="Wang X."/>
            <person name="Wu Q."/>
            <person name="Li C."/>
            <person name="Ren X."/>
            <person name="Wang J."/>
            <person name="Wang X."/>
            <person name="Li D."/>
            <person name="Liu D."/>
            <person name="Zhang X."/>
            <person name="Ji Z."/>
            <person name="Zhao W."/>
            <person name="Sun Y."/>
            <person name="Zhang Z."/>
            <person name="Bao J."/>
            <person name="Han Y."/>
            <person name="Dong L."/>
            <person name="Ji J."/>
            <person name="Chen P."/>
            <person name="Wu S."/>
            <person name="Liu J."/>
            <person name="Xiao Y."/>
            <person name="Bu D."/>
            <person name="Tan J."/>
            <person name="Yang L."/>
            <person name="Ye C."/>
            <person name="Zhang J."/>
            <person name="Xu J."/>
            <person name="Zhou Y."/>
            <person name="Yu Y."/>
            <person name="Zhang B."/>
            <person name="Zhuang S."/>
            <person name="Wei H."/>
            <person name="Liu B."/>
            <person name="Lei M."/>
            <person name="Yu H."/>
            <person name="Li Y."/>
            <person name="Xu H."/>
            <person name="Wei S."/>
            <person name="He X."/>
            <person name="Fang L."/>
            <person name="Zhang Z."/>
            <person name="Zhang Y."/>
            <person name="Huang X."/>
            <person name="Su Z."/>
            <person name="Tong W."/>
            <person name="Li J."/>
            <person name="Tong Z."/>
            <person name="Li S."/>
            <person name="Ye J."/>
            <person name="Wang L."/>
            <person name="Fang L."/>
            <person name="Lei T."/>
            <person name="Chen C.-S."/>
            <person name="Chen H.-C."/>
            <person name="Xu Z."/>
            <person name="Li H."/>
            <person name="Huang H."/>
            <person name="Zhang F."/>
            <person name="Xu H."/>
            <person name="Li N."/>
            <person name="Zhao C."/>
            <person name="Li S."/>
            <person name="Dong L."/>
            <person name="Huang Y."/>
            <person name="Li L."/>
            <person name="Xi Y."/>
            <person name="Qi Q."/>
            <person name="Li W."/>
            <person name="Zhang B."/>
            <person name="Hu W."/>
            <person name="Zhang Y."/>
            <person name="Tian X."/>
            <person name="Jiao Y."/>
            <person name="Liang X."/>
            <person name="Jin J."/>
            <person name="Gao L."/>
            <person name="Zheng W."/>
            <person name="Hao B."/>
            <person name="Liu S.-M."/>
            <person name="Wang W."/>
            <person name="Yuan L."/>
            <person name="Cao M."/>
            <person name="McDermott J."/>
            <person name="Samudrala R."/>
            <person name="Wang J."/>
            <person name="Wong G.K.-S."/>
            <person name="Yang H."/>
        </authorList>
    </citation>
    <scope>NUCLEOTIDE SEQUENCE [LARGE SCALE GENOMIC DNA]</scope>
    <source>
        <strain>cv. Nipponbare</strain>
    </source>
</reference>
<reference key="6">
    <citation type="journal article" date="2003" name="Science">
        <title>Collection, mapping, and annotation of over 28,000 cDNA clones from japonica rice.</title>
        <authorList>
            <consortium name="The rice full-length cDNA consortium"/>
        </authorList>
    </citation>
    <scope>NUCLEOTIDE SEQUENCE [LARGE SCALE MRNA]</scope>
    <source>
        <strain>cv. Nipponbare</strain>
    </source>
</reference>
<dbReference type="EMBL" id="AC090485">
    <property type="protein sequence ID" value="AAK98722.1"/>
    <property type="status" value="ALT_SEQ"/>
    <property type="molecule type" value="Genomic_DNA"/>
</dbReference>
<dbReference type="EMBL" id="AC105734">
    <property type="protein sequence ID" value="AAN87731.1"/>
    <property type="status" value="ALT_SEQ"/>
    <property type="molecule type" value="Genomic_DNA"/>
</dbReference>
<dbReference type="EMBL" id="DP000009">
    <property type="protein sequence ID" value="ABF93987.1"/>
    <property type="molecule type" value="Genomic_DNA"/>
</dbReference>
<dbReference type="EMBL" id="AP008209">
    <property type="protein sequence ID" value="BAF10879.1"/>
    <property type="molecule type" value="Genomic_DNA"/>
</dbReference>
<dbReference type="EMBL" id="AP014959">
    <property type="protein sequence ID" value="BAS82296.1"/>
    <property type="molecule type" value="Genomic_DNA"/>
</dbReference>
<dbReference type="EMBL" id="CM000140">
    <property type="protein sequence ID" value="EAZ25586.1"/>
    <property type="status" value="ALT_SEQ"/>
    <property type="molecule type" value="Genomic_DNA"/>
</dbReference>
<dbReference type="EMBL" id="AK110468">
    <property type="status" value="NOT_ANNOTATED_CDS"/>
    <property type="molecule type" value="mRNA"/>
</dbReference>
<dbReference type="RefSeq" id="XP_015632298.1">
    <property type="nucleotide sequence ID" value="XM_015776812.1"/>
</dbReference>
<dbReference type="RefSeq" id="XP_015632299.1">
    <property type="nucleotide sequence ID" value="XM_015776813.1"/>
</dbReference>
<dbReference type="SMR" id="Q10RR9"/>
<dbReference type="FunCoup" id="Q10RR9">
    <property type="interactions" value="724"/>
</dbReference>
<dbReference type="STRING" id="39947.Q10RR9"/>
<dbReference type="PaxDb" id="39947-Q10RR9"/>
<dbReference type="EnsemblPlants" id="Os03t0148000-01">
    <property type="protein sequence ID" value="Os03t0148000-01"/>
    <property type="gene ID" value="Os03g0148000"/>
</dbReference>
<dbReference type="GeneID" id="4331620"/>
<dbReference type="Gramene" id="Os03t0148000-01">
    <property type="protein sequence ID" value="Os03t0148000-01"/>
    <property type="gene ID" value="Os03g0148000"/>
</dbReference>
<dbReference type="KEGG" id="dosa:Os03g0148000"/>
<dbReference type="eggNOG" id="ENOG502QU17">
    <property type="taxonomic scope" value="Eukaryota"/>
</dbReference>
<dbReference type="HOGENOM" id="CLU_036033_0_0_1"/>
<dbReference type="InParanoid" id="Q10RR9"/>
<dbReference type="OMA" id="NDELEHM"/>
<dbReference type="OrthoDB" id="776561at2759"/>
<dbReference type="Proteomes" id="UP000000763">
    <property type="component" value="Chromosome 3"/>
</dbReference>
<dbReference type="Proteomes" id="UP000007752">
    <property type="component" value="Chromosome 3"/>
</dbReference>
<dbReference type="Proteomes" id="UP000059680">
    <property type="component" value="Chromosome 3"/>
</dbReference>
<dbReference type="GO" id="GO:0016020">
    <property type="term" value="C:membrane"/>
    <property type="evidence" value="ECO:0007669"/>
    <property type="project" value="UniProtKB-SubCell"/>
</dbReference>
<dbReference type="InterPro" id="IPR007749">
    <property type="entry name" value="DUF677"/>
</dbReference>
<dbReference type="PANTHER" id="PTHR31113:SF6">
    <property type="entry name" value="UPF0496 PROTEIN 3"/>
    <property type="match status" value="1"/>
</dbReference>
<dbReference type="PANTHER" id="PTHR31113">
    <property type="entry name" value="UPF0496 PROTEIN 3-RELATED"/>
    <property type="match status" value="1"/>
</dbReference>
<dbReference type="Pfam" id="PF05055">
    <property type="entry name" value="DUF677"/>
    <property type="match status" value="1"/>
</dbReference>
<accession>Q10RR9</accession>
<accession>A0A0P0VT25</accession>
<accession>A3AE47</accession>
<accession>Q8H088</accession>
<accession>Q947Z5</accession>
<proteinExistence type="evidence at transcript level"/>
<name>U496C_ORYSJ</name>
<feature type="chain" id="PRO_0000306909" description="UPF0496 protein 3">
    <location>
        <begin position="1"/>
        <end position="378"/>
    </location>
</feature>
<feature type="transmembrane region" description="Helical" evidence="1">
    <location>
        <begin position="231"/>
        <end position="251"/>
    </location>
</feature>
<feature type="coiled-coil region" evidence="1">
    <location>
        <begin position="329"/>
        <end position="356"/>
    </location>
</feature>
<feature type="sequence conflict" description="In Ref. 6; AK110468." evidence="2" ref="6">
    <original>A</original>
    <variation>T</variation>
    <location>
        <position position="182"/>
    </location>
</feature>
<protein>
    <recommendedName>
        <fullName>UPF0496 protein 3</fullName>
    </recommendedName>
</protein>
<keyword id="KW-0175">Coiled coil</keyword>
<keyword id="KW-0472">Membrane</keyword>
<keyword id="KW-1185">Reference proteome</keyword>
<keyword id="KW-0812">Transmembrane</keyword>
<keyword id="KW-1133">Transmembrane helix</keyword>
<gene>
    <name type="ordered locus">Os03g0148000</name>
    <name type="ordered locus">LOC_Os03g05440</name>
    <name type="ORF">OsJ_009069</name>
    <name type="ORF">OSJNBa0067N01.1</name>
    <name type="ORF">OSJNBb0050N02.3</name>
</gene>